<protein>
    <recommendedName>
        <fullName>Acylphosphatase</fullName>
        <ecNumber>3.6.1.7</ecNumber>
    </recommendedName>
    <alternativeName>
        <fullName>Acylphosphate phosphohydrolase</fullName>
    </alternativeName>
</protein>
<feature type="chain" id="PRO_0000326855" description="Acylphosphatase">
    <location>
        <begin position="1"/>
        <end position="101"/>
    </location>
</feature>
<feature type="domain" description="Acylphosphatase-like" evidence="1">
    <location>
        <begin position="13"/>
        <end position="101"/>
    </location>
</feature>
<feature type="active site" evidence="1">
    <location>
        <position position="28"/>
    </location>
</feature>
<feature type="active site" evidence="1">
    <location>
        <position position="46"/>
    </location>
</feature>
<gene>
    <name type="primary">acyP</name>
    <name type="ordered locus">APE_1591.1</name>
</gene>
<accession>Q9YBK7</accession>
<evidence type="ECO:0000255" key="1">
    <source>
        <dbReference type="PROSITE-ProRule" id="PRU00520"/>
    </source>
</evidence>
<evidence type="ECO:0000305" key="2"/>
<proteinExistence type="inferred from homology"/>
<comment type="catalytic activity">
    <reaction>
        <text>an acyl phosphate + H2O = a carboxylate + phosphate + H(+)</text>
        <dbReference type="Rhea" id="RHEA:14965"/>
        <dbReference type="ChEBI" id="CHEBI:15377"/>
        <dbReference type="ChEBI" id="CHEBI:15378"/>
        <dbReference type="ChEBI" id="CHEBI:29067"/>
        <dbReference type="ChEBI" id="CHEBI:43474"/>
        <dbReference type="ChEBI" id="CHEBI:59918"/>
        <dbReference type="EC" id="3.6.1.7"/>
    </reaction>
</comment>
<comment type="similarity">
    <text evidence="2">Belongs to the acylphosphatase family.</text>
</comment>
<keyword id="KW-0378">Hydrolase</keyword>
<keyword id="KW-1185">Reference proteome</keyword>
<dbReference type="EC" id="3.6.1.7"/>
<dbReference type="EMBL" id="BA000002">
    <property type="protein sequence ID" value="BAA80591.2"/>
    <property type="molecule type" value="Genomic_DNA"/>
</dbReference>
<dbReference type="PIR" id="B72538">
    <property type="entry name" value="B72538"/>
</dbReference>
<dbReference type="RefSeq" id="WP_010866473.1">
    <property type="nucleotide sequence ID" value="NC_000854.2"/>
</dbReference>
<dbReference type="SMR" id="Q9YBK7"/>
<dbReference type="STRING" id="272557.APE_1591.1"/>
<dbReference type="EnsemblBacteria" id="BAA80591">
    <property type="protein sequence ID" value="BAA80591"/>
    <property type="gene ID" value="APE_1591.1"/>
</dbReference>
<dbReference type="GeneID" id="1446117"/>
<dbReference type="KEGG" id="ape:APE_1591.1"/>
<dbReference type="PATRIC" id="fig|272557.25.peg.1076"/>
<dbReference type="eggNOG" id="arCOG01674">
    <property type="taxonomic scope" value="Archaea"/>
</dbReference>
<dbReference type="Proteomes" id="UP000002518">
    <property type="component" value="Chromosome"/>
</dbReference>
<dbReference type="GO" id="GO:0003998">
    <property type="term" value="F:acylphosphatase activity"/>
    <property type="evidence" value="ECO:0007669"/>
    <property type="project" value="UniProtKB-EC"/>
</dbReference>
<dbReference type="Gene3D" id="3.30.70.100">
    <property type="match status" value="1"/>
</dbReference>
<dbReference type="InterPro" id="IPR020456">
    <property type="entry name" value="Acylphosphatase"/>
</dbReference>
<dbReference type="InterPro" id="IPR001792">
    <property type="entry name" value="Acylphosphatase-like_dom"/>
</dbReference>
<dbReference type="InterPro" id="IPR036046">
    <property type="entry name" value="Acylphosphatase-like_dom_sf"/>
</dbReference>
<dbReference type="InterPro" id="IPR017968">
    <property type="entry name" value="Acylphosphatase_CS"/>
</dbReference>
<dbReference type="PANTHER" id="PTHR47268">
    <property type="entry name" value="ACYLPHOSPHATASE"/>
    <property type="match status" value="1"/>
</dbReference>
<dbReference type="PANTHER" id="PTHR47268:SF4">
    <property type="entry name" value="ACYLPHOSPHATASE"/>
    <property type="match status" value="1"/>
</dbReference>
<dbReference type="Pfam" id="PF00708">
    <property type="entry name" value="Acylphosphatase"/>
    <property type="match status" value="1"/>
</dbReference>
<dbReference type="SUPFAM" id="SSF54975">
    <property type="entry name" value="Acylphosphatase/BLUF domain-like"/>
    <property type="match status" value="1"/>
</dbReference>
<dbReference type="PROSITE" id="PS00150">
    <property type="entry name" value="ACYLPHOSPHATASE_1"/>
    <property type="match status" value="1"/>
</dbReference>
<dbReference type="PROSITE" id="PS51160">
    <property type="entry name" value="ACYLPHOSPHATASE_3"/>
    <property type="match status" value="1"/>
</dbReference>
<organism>
    <name type="scientific">Aeropyrum pernix (strain ATCC 700893 / DSM 11879 / JCM 9820 / NBRC 100138 / K1)</name>
    <dbReference type="NCBI Taxonomy" id="272557"/>
    <lineage>
        <taxon>Archaea</taxon>
        <taxon>Thermoproteota</taxon>
        <taxon>Thermoprotei</taxon>
        <taxon>Desulfurococcales</taxon>
        <taxon>Desulfurococcaceae</taxon>
        <taxon>Aeropyrum</taxon>
    </lineage>
</organism>
<name>ACYP_AERPE</name>
<sequence>MEGVPSVRDSLVRARILVRGVVQGVFFRASMREEALRLGLSGWVRNLPDGESVEAVVEGRGDAVERIICWCLRGPPAARVRELRVELEPYKGEFRGFEIRY</sequence>
<reference key="1">
    <citation type="journal article" date="1999" name="DNA Res.">
        <title>Complete genome sequence of an aerobic hyper-thermophilic crenarchaeon, Aeropyrum pernix K1.</title>
        <authorList>
            <person name="Kawarabayasi Y."/>
            <person name="Hino Y."/>
            <person name="Horikawa H."/>
            <person name="Yamazaki S."/>
            <person name="Haikawa Y."/>
            <person name="Jin-no K."/>
            <person name="Takahashi M."/>
            <person name="Sekine M."/>
            <person name="Baba S."/>
            <person name="Ankai A."/>
            <person name="Kosugi H."/>
            <person name="Hosoyama A."/>
            <person name="Fukui S."/>
            <person name="Nagai Y."/>
            <person name="Nishijima K."/>
            <person name="Nakazawa H."/>
            <person name="Takamiya M."/>
            <person name="Masuda S."/>
            <person name="Funahashi T."/>
            <person name="Tanaka T."/>
            <person name="Kudoh Y."/>
            <person name="Yamazaki J."/>
            <person name="Kushida N."/>
            <person name="Oguchi A."/>
            <person name="Aoki K."/>
            <person name="Kubota K."/>
            <person name="Nakamura Y."/>
            <person name="Nomura N."/>
            <person name="Sako Y."/>
            <person name="Kikuchi H."/>
        </authorList>
    </citation>
    <scope>NUCLEOTIDE SEQUENCE [LARGE SCALE GENOMIC DNA]</scope>
    <source>
        <strain>ATCC 700893 / DSM 11879 / JCM 9820 / NBRC 100138 / K1</strain>
    </source>
</reference>